<feature type="signal peptide" evidence="2">
    <location>
        <begin position="1"/>
        <end position="33"/>
    </location>
</feature>
<feature type="chain" id="PRO_0000371673" description="Probable pectinesterase/pectinesterase inhibitor 16">
    <location>
        <begin position="34"/>
        <end position="518"/>
    </location>
</feature>
<feature type="region of interest" description="Pectinesterase inhibitor 16">
    <location>
        <begin position="30"/>
        <end position="172"/>
    </location>
</feature>
<feature type="region of interest" description="Pectinesterase 16">
    <location>
        <begin position="213"/>
        <end position="502"/>
    </location>
</feature>
<feature type="active site" description="Proton donor; for pectinesterase activity" evidence="3">
    <location>
        <position position="342"/>
    </location>
</feature>
<feature type="active site" description="Nucleophile; for pectinesterase activity" evidence="3">
    <location>
        <position position="363"/>
    </location>
</feature>
<feature type="binding site" evidence="1">
    <location>
        <position position="289"/>
    </location>
    <ligand>
        <name>substrate</name>
        <note>for pectinesterase activity</note>
    </ligand>
</feature>
<feature type="binding site" evidence="1">
    <location>
        <position position="319"/>
    </location>
    <ligand>
        <name>substrate</name>
        <note>for pectinesterase activity</note>
    </ligand>
</feature>
<feature type="binding site" evidence="1">
    <location>
        <position position="422"/>
    </location>
    <ligand>
        <name>substrate</name>
        <note>for pectinesterase activity</note>
    </ligand>
</feature>
<feature type="binding site" evidence="1">
    <location>
        <position position="424"/>
    </location>
    <ligand>
        <name>substrate</name>
        <note>for pectinesterase activity</note>
    </ligand>
</feature>
<feature type="site" description="Transition state stabilizer" evidence="1">
    <location>
        <position position="341"/>
    </location>
</feature>
<feature type="glycosylation site" description="N-linked (GlcNAc...) asparagine" evidence="2">
    <location>
        <position position="82"/>
    </location>
</feature>
<feature type="glycosylation site" description="N-linked (GlcNAc...) asparagine" evidence="2">
    <location>
        <position position="161"/>
    </location>
</feature>
<protein>
    <recommendedName>
        <fullName>Probable pectinesterase/pectinesterase inhibitor 16</fullName>
    </recommendedName>
    <domain>
        <recommendedName>
            <fullName>Pectinesterase inhibitor 16</fullName>
        </recommendedName>
        <alternativeName>
            <fullName>Pectin methylesterase inhibitor 16</fullName>
        </alternativeName>
    </domain>
    <domain>
        <recommendedName>
            <fullName>Pectinesterase 16</fullName>
            <shortName>PE 16</shortName>
            <ecNumber>3.1.1.11</ecNumber>
        </recommendedName>
        <alternativeName>
            <fullName>AtPMEpcrD</fullName>
        </alternativeName>
        <alternativeName>
            <fullName>Pectin methylesterase 16</fullName>
            <shortName>AtPME16</shortName>
        </alternativeName>
    </domain>
</protein>
<organism>
    <name type="scientific">Arabidopsis thaliana</name>
    <name type="common">Mouse-ear cress</name>
    <dbReference type="NCBI Taxonomy" id="3702"/>
    <lineage>
        <taxon>Eukaryota</taxon>
        <taxon>Viridiplantae</taxon>
        <taxon>Streptophyta</taxon>
        <taxon>Embryophyta</taxon>
        <taxon>Tracheophyta</taxon>
        <taxon>Spermatophyta</taxon>
        <taxon>Magnoliopsida</taxon>
        <taxon>eudicotyledons</taxon>
        <taxon>Gunneridae</taxon>
        <taxon>Pentapetalae</taxon>
        <taxon>rosids</taxon>
        <taxon>malvids</taxon>
        <taxon>Brassicales</taxon>
        <taxon>Brassicaceae</taxon>
        <taxon>Camelineae</taxon>
        <taxon>Arabidopsis</taxon>
    </lineage>
</organism>
<evidence type="ECO:0000250" key="1"/>
<evidence type="ECO:0000255" key="2"/>
<evidence type="ECO:0000255" key="3">
    <source>
        <dbReference type="PROSITE-ProRule" id="PRU10040"/>
    </source>
</evidence>
<evidence type="ECO:0000269" key="4">
    <source>
    </source>
</evidence>
<evidence type="ECO:0000305" key="5"/>
<accession>Q9SKX2</accession>
<gene>
    <name type="primary">PME16</name>
    <name type="synonym">ARATH16</name>
    <name type="ordered locus">At2g43050</name>
    <name type="ORF">MFL8.9</name>
</gene>
<comment type="function">
    <text evidence="1">Acts in the modification of cell walls via demethylesterification of cell wall pectin.</text>
</comment>
<comment type="catalytic activity">
    <reaction>
        <text>[(1-&gt;4)-alpha-D-galacturonosyl methyl ester](n) + n H2O = [(1-&gt;4)-alpha-D-galacturonosyl](n) + n methanol + n H(+)</text>
        <dbReference type="Rhea" id="RHEA:22380"/>
        <dbReference type="Rhea" id="RHEA-COMP:14570"/>
        <dbReference type="Rhea" id="RHEA-COMP:14573"/>
        <dbReference type="ChEBI" id="CHEBI:15377"/>
        <dbReference type="ChEBI" id="CHEBI:15378"/>
        <dbReference type="ChEBI" id="CHEBI:17790"/>
        <dbReference type="ChEBI" id="CHEBI:140522"/>
        <dbReference type="ChEBI" id="CHEBI:140523"/>
        <dbReference type="EC" id="3.1.1.11"/>
    </reaction>
</comment>
<comment type="pathway">
    <text>Glycan metabolism; pectin degradation; 2-dehydro-3-deoxy-D-gluconate from pectin: step 1/5.</text>
</comment>
<comment type="subcellular location">
    <subcellularLocation>
        <location evidence="1">Secreted</location>
        <location evidence="1">Cell wall</location>
    </subcellularLocation>
</comment>
<comment type="tissue specificity">
    <text evidence="4">Expressed in siliques and floral stems.</text>
</comment>
<comment type="miscellaneous">
    <text>The PMEI region may act as an autoinhibitory domain and prevent untimely PME activity during transport.</text>
</comment>
<comment type="similarity">
    <text evidence="5">In the N-terminal section; belongs to the PMEI family.</text>
</comment>
<comment type="similarity">
    <text evidence="5">In the C-terminal section; belongs to the pectinesterase family.</text>
</comment>
<sequence length="518" mass="56589">MASSSSISNHKIPNTLMFLVIVNFLYLIQTNSAVSISSNSNSHFSRFSRHRSSPSSKTKQGFLATVQESMNHALLARSLAFNLTLSHRTVQTHTFDPIHDCLELLDDTLDMLSRIHADNDEEDVHTWLSAALTNQDTCEQSLQEKSESYKHGLAMDFVARNLTGLLTSSLDLFVSVKSKHRKLLSKQEYFPTFVPSSEQRRLLEAPVEELNVDAVVAPDGSGTHKTIGEALLSTSLASSGGRTKIYLKAGTYHENINIPTKQKNVMLVGDGKGKTVIVGSRSNRGGWTTYKTATVAAMGEGFIARDMTFVNNAGPKSEQAVALRVGADKSVVHRCSVEGYQDSLYTHSKRQFYRETDITGTVDFIFGNSAVVFQSCNIAARKPLPGQRNFVTAQGRSNPGQNTGIAIQNCRITAESMTYLGRPWKEYSRTVVMQSFIGGSIHPSGWSPWSGGFGLKSLFYGEYGNSGPGSSVSGRVKWSGCHPSLTVTEAEKFTVASFIDGNIWLPSTGVSFDPGLVN</sequence>
<dbReference type="EC" id="3.1.1.11"/>
<dbReference type="EMBL" id="AC006224">
    <property type="protein sequence ID" value="AAD22126.1"/>
    <property type="molecule type" value="Genomic_DNA"/>
</dbReference>
<dbReference type="EMBL" id="CP002685">
    <property type="protein sequence ID" value="AEC10203.1"/>
    <property type="molecule type" value="Genomic_DNA"/>
</dbReference>
<dbReference type="EMBL" id="BT023433">
    <property type="protein sequence ID" value="AAY56424.1"/>
    <property type="molecule type" value="mRNA"/>
</dbReference>
<dbReference type="PIR" id="D84861">
    <property type="entry name" value="D84861"/>
</dbReference>
<dbReference type="RefSeq" id="NP_181833.1">
    <property type="nucleotide sequence ID" value="NM_129866.5"/>
</dbReference>
<dbReference type="SMR" id="Q9SKX2"/>
<dbReference type="FunCoup" id="Q9SKX2">
    <property type="interactions" value="67"/>
</dbReference>
<dbReference type="STRING" id="3702.Q9SKX2"/>
<dbReference type="GlyCosmos" id="Q9SKX2">
    <property type="glycosylation" value="2 sites, No reported glycans"/>
</dbReference>
<dbReference type="GlyGen" id="Q9SKX2">
    <property type="glycosylation" value="2 sites"/>
</dbReference>
<dbReference type="PaxDb" id="3702-AT2G43050.1"/>
<dbReference type="ProteomicsDB" id="235046"/>
<dbReference type="EnsemblPlants" id="AT2G43050.1">
    <property type="protein sequence ID" value="AT2G43050.1"/>
    <property type="gene ID" value="AT2G43050"/>
</dbReference>
<dbReference type="GeneID" id="818907"/>
<dbReference type="Gramene" id="AT2G43050.1">
    <property type="protein sequence ID" value="AT2G43050.1"/>
    <property type="gene ID" value="AT2G43050"/>
</dbReference>
<dbReference type="KEGG" id="ath:AT2G43050"/>
<dbReference type="Araport" id="AT2G43050"/>
<dbReference type="TAIR" id="AT2G43050">
    <property type="gene designation" value="ATPMEPCRD"/>
</dbReference>
<dbReference type="eggNOG" id="ENOG502QRAG">
    <property type="taxonomic scope" value="Eukaryota"/>
</dbReference>
<dbReference type="HOGENOM" id="CLU_012243_9_1_1"/>
<dbReference type="InParanoid" id="Q9SKX2"/>
<dbReference type="OMA" id="LYNIEEA"/>
<dbReference type="OrthoDB" id="2019149at2759"/>
<dbReference type="PhylomeDB" id="Q9SKX2"/>
<dbReference type="BioCyc" id="ARA:AT2G43050-MONOMER"/>
<dbReference type="UniPathway" id="UPA00545">
    <property type="reaction ID" value="UER00823"/>
</dbReference>
<dbReference type="PRO" id="PR:Q9SKX2"/>
<dbReference type="Proteomes" id="UP000006548">
    <property type="component" value="Chromosome 2"/>
</dbReference>
<dbReference type="ExpressionAtlas" id="Q9SKX2">
    <property type="expression patterns" value="baseline and differential"/>
</dbReference>
<dbReference type="GO" id="GO:0005576">
    <property type="term" value="C:extracellular region"/>
    <property type="evidence" value="ECO:0007669"/>
    <property type="project" value="UniProtKB-KW"/>
</dbReference>
<dbReference type="GO" id="GO:0004857">
    <property type="term" value="F:enzyme inhibitor activity"/>
    <property type="evidence" value="ECO:0007669"/>
    <property type="project" value="InterPro"/>
</dbReference>
<dbReference type="GO" id="GO:0030599">
    <property type="term" value="F:pectinesterase activity"/>
    <property type="evidence" value="ECO:0007669"/>
    <property type="project" value="UniProtKB-EC"/>
</dbReference>
<dbReference type="GO" id="GO:0042545">
    <property type="term" value="P:cell wall modification"/>
    <property type="evidence" value="ECO:0007669"/>
    <property type="project" value="InterPro"/>
</dbReference>
<dbReference type="GO" id="GO:0045490">
    <property type="term" value="P:pectin catabolic process"/>
    <property type="evidence" value="ECO:0007669"/>
    <property type="project" value="UniProtKB-UniPathway"/>
</dbReference>
<dbReference type="CDD" id="cd15799">
    <property type="entry name" value="PMEI-like_4"/>
    <property type="match status" value="1"/>
</dbReference>
<dbReference type="FunFam" id="2.160.20.10:FF:000001">
    <property type="entry name" value="Pectinesterase"/>
    <property type="match status" value="1"/>
</dbReference>
<dbReference type="Gene3D" id="1.20.140.40">
    <property type="entry name" value="Invertase/pectin methylesterase inhibitor family protein"/>
    <property type="match status" value="1"/>
</dbReference>
<dbReference type="Gene3D" id="2.160.20.10">
    <property type="entry name" value="Single-stranded right-handed beta-helix, Pectin lyase-like"/>
    <property type="match status" value="1"/>
</dbReference>
<dbReference type="InterPro" id="IPR035513">
    <property type="entry name" value="Invertase/methylesterase_inhib"/>
</dbReference>
<dbReference type="InterPro" id="IPR012334">
    <property type="entry name" value="Pectin_lyas_fold"/>
</dbReference>
<dbReference type="InterPro" id="IPR011050">
    <property type="entry name" value="Pectin_lyase_fold/virulence"/>
</dbReference>
<dbReference type="InterPro" id="IPR033131">
    <property type="entry name" value="Pectinesterase_Asp_AS"/>
</dbReference>
<dbReference type="InterPro" id="IPR000070">
    <property type="entry name" value="Pectinesterase_cat"/>
</dbReference>
<dbReference type="InterPro" id="IPR006501">
    <property type="entry name" value="Pectinesterase_inhib_dom"/>
</dbReference>
<dbReference type="PANTHER" id="PTHR31707">
    <property type="entry name" value="PECTINESTERASE"/>
    <property type="match status" value="1"/>
</dbReference>
<dbReference type="Pfam" id="PF01095">
    <property type="entry name" value="Pectinesterase"/>
    <property type="match status" value="1"/>
</dbReference>
<dbReference type="Pfam" id="PF04043">
    <property type="entry name" value="PMEI"/>
    <property type="match status" value="1"/>
</dbReference>
<dbReference type="SMART" id="SM00856">
    <property type="entry name" value="PMEI"/>
    <property type="match status" value="1"/>
</dbReference>
<dbReference type="SUPFAM" id="SSF51126">
    <property type="entry name" value="Pectin lyase-like"/>
    <property type="match status" value="1"/>
</dbReference>
<dbReference type="SUPFAM" id="SSF101148">
    <property type="entry name" value="Plant invertase/pectin methylesterase inhibitor"/>
    <property type="match status" value="1"/>
</dbReference>
<dbReference type="PROSITE" id="PS00503">
    <property type="entry name" value="PECTINESTERASE_2"/>
    <property type="match status" value="1"/>
</dbReference>
<name>PME16_ARATH</name>
<reference key="1">
    <citation type="journal article" date="1999" name="Nature">
        <title>Sequence and analysis of chromosome 2 of the plant Arabidopsis thaliana.</title>
        <authorList>
            <person name="Lin X."/>
            <person name="Kaul S."/>
            <person name="Rounsley S.D."/>
            <person name="Shea T.P."/>
            <person name="Benito M.-I."/>
            <person name="Town C.D."/>
            <person name="Fujii C.Y."/>
            <person name="Mason T.M."/>
            <person name="Bowman C.L."/>
            <person name="Barnstead M.E."/>
            <person name="Feldblyum T.V."/>
            <person name="Buell C.R."/>
            <person name="Ketchum K.A."/>
            <person name="Lee J.J."/>
            <person name="Ronning C.M."/>
            <person name="Koo H.L."/>
            <person name="Moffat K.S."/>
            <person name="Cronin L.A."/>
            <person name="Shen M."/>
            <person name="Pai G."/>
            <person name="Van Aken S."/>
            <person name="Umayam L."/>
            <person name="Tallon L.J."/>
            <person name="Gill J.E."/>
            <person name="Adams M.D."/>
            <person name="Carrera A.J."/>
            <person name="Creasy T.H."/>
            <person name="Goodman H.M."/>
            <person name="Somerville C.R."/>
            <person name="Copenhaver G.P."/>
            <person name="Preuss D."/>
            <person name="Nierman W.C."/>
            <person name="White O."/>
            <person name="Eisen J.A."/>
            <person name="Salzberg S.L."/>
            <person name="Fraser C.M."/>
            <person name="Venter J.C."/>
        </authorList>
    </citation>
    <scope>NUCLEOTIDE SEQUENCE [LARGE SCALE GENOMIC DNA]</scope>
    <source>
        <strain>cv. Columbia</strain>
    </source>
</reference>
<reference key="2">
    <citation type="journal article" date="2017" name="Plant J.">
        <title>Araport11: a complete reannotation of the Arabidopsis thaliana reference genome.</title>
        <authorList>
            <person name="Cheng C.Y."/>
            <person name="Krishnakumar V."/>
            <person name="Chan A.P."/>
            <person name="Thibaud-Nissen F."/>
            <person name="Schobel S."/>
            <person name="Town C.D."/>
        </authorList>
    </citation>
    <scope>GENOME REANNOTATION</scope>
    <source>
        <strain>cv. Columbia</strain>
    </source>
</reference>
<reference key="3">
    <citation type="submission" date="2005-05" db="EMBL/GenBank/DDBJ databases">
        <title>Arabidopsis ORF clones.</title>
        <authorList>
            <person name="Cheuk R.F."/>
            <person name="Chen H."/>
            <person name="Kim C.J."/>
            <person name="Shinn P."/>
            <person name="Ecker J.R."/>
        </authorList>
    </citation>
    <scope>NUCLEOTIDE SEQUENCE [LARGE SCALE MRNA]</scope>
    <source>
        <strain>cv. Columbia</strain>
    </source>
</reference>
<reference key="4">
    <citation type="journal article" date="1998" name="Gene">
        <title>Characterization of the pectin methylesterase-like gene AtPME3: a new member of a gene family comprising at least 12 genes in Arabidopsis thaliana.</title>
        <authorList>
            <person name="Micheli F."/>
            <person name="Holliger C."/>
            <person name="Goldberg R."/>
            <person name="Richard L."/>
        </authorList>
    </citation>
    <scope>TISSUE SPECIFICITY</scope>
</reference>
<reference key="5">
    <citation type="journal article" date="2004" name="Carbohydr. Res.">
        <title>Pectin methylesterases: sequence-structural features and phylogenetic relationships.</title>
        <authorList>
            <person name="Markovic O."/>
            <person name="Janecek S."/>
        </authorList>
    </citation>
    <scope>GENE FAMILY</scope>
    <scope>NOMENCLATURE</scope>
</reference>
<keyword id="KW-0063">Aspartyl esterase</keyword>
<keyword id="KW-0134">Cell wall</keyword>
<keyword id="KW-0961">Cell wall biogenesis/degradation</keyword>
<keyword id="KW-0325">Glycoprotein</keyword>
<keyword id="KW-0378">Hydrolase</keyword>
<keyword id="KW-1185">Reference proteome</keyword>
<keyword id="KW-0964">Secreted</keyword>
<keyword id="KW-0732">Signal</keyword>
<proteinExistence type="evidence at transcript level"/>